<accession>P12732</accession>
<accession>Q5V1S6</accession>
<gene>
    <name evidence="1" type="primary">rpl23</name>
    <name type="ordered locus">rrnAC1609</name>
</gene>
<protein>
    <recommendedName>
        <fullName evidence="1">Large ribosomal subunit protein uL23</fullName>
    </recommendedName>
    <alternativeName>
        <fullName evidence="6">50S ribosomal protein L23</fullName>
    </alternativeName>
    <alternativeName>
        <fullName>Hl25</fullName>
    </alternativeName>
    <alternativeName>
        <fullName>Hmal23</fullName>
    </alternativeName>
    <alternativeName>
        <fullName>L21</fullName>
    </alternativeName>
</protein>
<reference key="1">
    <citation type="journal article" date="1988" name="Eur. J. Biochem.">
        <title>Complete amino acid sequences of the ribosomal proteins L25, L29 and L31 from the archaebacterium Halobacterium marismortui.</title>
        <authorList>
            <person name="Hatakeyama T."/>
            <person name="Kimura M."/>
        </authorList>
    </citation>
    <scope>PROTEIN SEQUENCE OF 2-85</scope>
</reference>
<reference key="2">
    <citation type="journal article" date="1990" name="J. Biol. Chem.">
        <title>Organization and nucleotide sequence of a gene cluster coding for eight ribosomal proteins in the archaebacterium Halobacterium marismortui.</title>
        <authorList>
            <person name="Arndt E."/>
            <person name="Kroemer W."/>
            <person name="Hatakeyama T."/>
        </authorList>
    </citation>
    <scope>NUCLEOTIDE SEQUENCE [GENOMIC DNA]</scope>
</reference>
<reference key="3">
    <citation type="journal article" date="2004" name="Genome Res.">
        <title>Genome sequence of Haloarcula marismortui: a halophilic archaeon from the Dead Sea.</title>
        <authorList>
            <person name="Baliga N.S."/>
            <person name="Bonneau R."/>
            <person name="Facciotti M.T."/>
            <person name="Pan M."/>
            <person name="Glusman G."/>
            <person name="Deutsch E.W."/>
            <person name="Shannon P."/>
            <person name="Chiu Y."/>
            <person name="Weng R.S."/>
            <person name="Gan R.R."/>
            <person name="Hung P."/>
            <person name="Date S.V."/>
            <person name="Marcotte E."/>
            <person name="Hood L."/>
            <person name="Ng W.V."/>
        </authorList>
    </citation>
    <scope>NUCLEOTIDE SEQUENCE [LARGE SCALE GENOMIC DNA]</scope>
    <source>
        <strain>ATCC 43049 / DSM 3752 / JCM 8966 / VKM B-1809</strain>
    </source>
</reference>
<reference key="4">
    <citation type="journal article" date="1988" name="Biochemistry">
        <title>Extended N-terminal sequencing of proteins of archaebacterial ribosomes blotted from two-dimensional gels onto glass fiber and poly(vinylidene difluoride) membrane.</title>
        <authorList>
            <person name="Walsh M.J."/>
            <person name="McDougall J."/>
            <person name="Wittmann-Liebold B."/>
        </authorList>
    </citation>
    <scope>PROTEIN SEQUENCE OF 2-23</scope>
</reference>
<reference key="5">
    <citation type="journal article" date="2000" name="Science">
        <title>The complete atomic structure of the large ribosomal subunit at 2.4 A resolution.</title>
        <authorList>
            <person name="Ban N."/>
            <person name="Nissen P."/>
            <person name="Hansen J."/>
            <person name="Moore P.B."/>
            <person name="Steitz T.A."/>
        </authorList>
    </citation>
    <scope>X-RAY CRYSTALLOGRAPHY (2.4 ANGSTROMS) OF THE 50S SUBUNIT</scope>
    <source>
        <strain>ATCC 43049 / DSM 3752 / JCM 8966 / VKM B-1809</strain>
    </source>
</reference>
<reference key="6">
    <citation type="journal article" date="2000" name="Science">
        <title>The structural basis of ribosome activity in peptide bond synthesis.</title>
        <authorList>
            <person name="Nissen P."/>
            <person name="Hansen J."/>
            <person name="Ban N."/>
            <person name="Moore P.B."/>
            <person name="Steitz T.A."/>
        </authorList>
    </citation>
    <scope>X-RAY CRYSTALLOGRAPHY (3.0 ANGSTROMS) OF THE 50S SUBUNIT</scope>
    <source>
        <strain>ATCC 43049 / DSM 3752 / JCM 8966 / VKM B-1809</strain>
    </source>
</reference>
<reference key="7">
    <citation type="journal article" date="2002" name="Nat. Struct. Biol.">
        <title>A pre-translocational intermediate in protein synthesis observed in crystals of enzymatically active 50S subunits.</title>
        <authorList>
            <person name="Schmeing T.M."/>
            <person name="Seila A.C."/>
            <person name="Hansen J.L."/>
            <person name="Freeborn B."/>
            <person name="Soukup J.K."/>
            <person name="Scaringe S.A."/>
            <person name="Strobel S.A."/>
            <person name="Moore P.B."/>
            <person name="Steitz T.A."/>
        </authorList>
    </citation>
    <scope>X-RAY CRYSTALLOGRAPHY (3.1 ANGSTROMS) OF THE 50S SUBUNIT</scope>
    <source>
        <strain>ATCC 43049 / DSM 3752 / JCM 8966 / VKM B-1809</strain>
    </source>
</reference>
<reference key="8">
    <citation type="journal article" date="2001" name="EMBO J.">
        <title>The kink-turn: a new RNA secondary structure motif.</title>
        <authorList>
            <person name="Klein D.J."/>
            <person name="Schmeing T.M."/>
            <person name="Moore P.B."/>
            <person name="Steitz T.A."/>
        </authorList>
    </citation>
    <scope>X-RAY CRYSTALLOGRAPHY (2.4 ANGSTROMS) OF THE 50S SUBUNIT</scope>
    <source>
        <strain>ATCC 43049 / DSM 3752 / JCM 8966 / VKM B-1809</strain>
    </source>
</reference>
<reference key="9">
    <citation type="journal article" date="2002" name="Mol. Cell">
        <title>The structures of four macrolide antibiotics bound to the large ribosomal subunit.</title>
        <authorList>
            <person name="Hansen J.L."/>
            <person name="Ippolito J.A."/>
            <person name="Ban N."/>
            <person name="Nissen P."/>
            <person name="Moore P.B."/>
            <person name="Steitz T.A."/>
        </authorList>
    </citation>
    <scope>X-RAY CRYSTALLOGRAPHY (3.0 ANGSTROMS) OF THE 50S SUBUNIT IN COMPLEX WITH FOUR MACROLIDE ANTIBIOTICS</scope>
    <source>
        <strain>ATCC 43049 / DSM 3752 / JCM 8966 / VKM B-1809</strain>
    </source>
</reference>
<reference key="10">
    <citation type="journal article" date="2002" name="Proc. Natl. Acad. Sci. U.S.A.">
        <title>Structural insights into peptide bond formation.</title>
        <authorList>
            <person name="Hansen J.L."/>
            <person name="Schmeing T.M."/>
            <person name="Moore P.B."/>
            <person name="Steitz T.A."/>
        </authorList>
    </citation>
    <scope>X-RAY CRYSTALLOGRAPHY (2.8 ANGSTROMS) OF THE 50S SUBUNIT</scope>
    <source>
        <strain>ATCC 43049 / DSM 3752 / JCM 8966 / VKM B-1809</strain>
    </source>
</reference>
<reference key="11">
    <citation type="journal article" date="2003" name="J. Mol. Biol.">
        <title>Structures of five antibiotics bound at the peptidyl transferase center of the large ribosomal subunit.</title>
        <authorList>
            <person name="Hansen J.L."/>
            <person name="Moore P.B."/>
            <person name="Steitz T.A."/>
        </authorList>
    </citation>
    <scope>X-RAY CRYSTALLOGRAPHY (3.0 ANGSTROMS) OF THE 50S SUBUNIT IN COMPLEX WITH FIVE ANTIBIOTICS AT THE PEPTIDYL TRANSFERASE CENTER</scope>
    <source>
        <strain>ATCC 43049 / DSM 3752 / JCM 8966 / VKM B-1809</strain>
    </source>
</reference>
<reference key="12">
    <citation type="journal article" date="2003" name="RNA">
        <title>Structures of deacylated tRNA mimics bound to the E site of the large ribosomal subunit.</title>
        <authorList>
            <person name="Schmeing T.M."/>
            <person name="Moore P.B."/>
            <person name="Steitz T.A."/>
        </authorList>
    </citation>
    <scope>X-RAY CRYSTALLOGRAPHY (2.9 ANGSTROMS) OF THE 50S SUBUNIT WITH TWO DIFFERENT E SITE SUBSTRATES</scope>
</reference>
<reference key="13">
    <citation type="journal article" date="2013" name="Acta Crystallogr. D">
        <title>Revisiting the Haloarcula marismortui 50S ribosomal subunit model.</title>
        <authorList>
            <person name="Gabdulkhakov A."/>
            <person name="Nikonov S."/>
            <person name="Garber M."/>
        </authorList>
    </citation>
    <scope>X-RAY CRYSTALLOGRAPHY (2.4 ANGSTROMS) OF THE 50S SUBUNIT</scope>
</reference>
<comment type="function">
    <text>Binds to a specific region on the 23S rRNA. Located at the polypeptide exit tunnel on the outside of the subunit.</text>
</comment>
<comment type="subunit">
    <text evidence="1 2 3">Part of the 50S ribosomal subunit. Interacts with protein L29 and weakly with protein L39e.</text>
</comment>
<comment type="similarity">
    <text evidence="1">Belongs to the universal ribosomal protein uL23 family.</text>
</comment>
<feature type="initiator methionine" description="Removed" evidence="4 5">
    <location>
        <position position="1"/>
    </location>
</feature>
<feature type="chain" id="PRO_0000129435" description="Large ribosomal subunit protein uL23">
    <location>
        <begin position="2"/>
        <end position="85"/>
    </location>
</feature>
<feature type="strand" evidence="7">
    <location>
        <begin position="5"/>
        <end position="9"/>
    </location>
</feature>
<feature type="helix" evidence="7">
    <location>
        <begin position="13"/>
        <end position="21"/>
    </location>
</feature>
<feature type="strand" evidence="7">
    <location>
        <begin position="24"/>
        <end position="29"/>
    </location>
</feature>
<feature type="helix" evidence="7">
    <location>
        <begin position="35"/>
        <end position="46"/>
    </location>
</feature>
<feature type="strand" evidence="7">
    <location>
        <begin position="50"/>
        <end position="57"/>
    </location>
</feature>
<feature type="strand" evidence="7">
    <location>
        <begin position="61"/>
        <end position="69"/>
    </location>
</feature>
<feature type="strand" evidence="8">
    <location>
        <begin position="71"/>
        <end position="73"/>
    </location>
</feature>
<feature type="helix" evidence="7">
    <location>
        <begin position="75"/>
        <end position="79"/>
    </location>
</feature>
<dbReference type="EMBL" id="J05222">
    <property type="protein sequence ID" value="AAA86861.1"/>
    <property type="molecule type" value="Genomic_DNA"/>
</dbReference>
<dbReference type="EMBL" id="AY596297">
    <property type="protein sequence ID" value="AAV46526.1"/>
    <property type="molecule type" value="Genomic_DNA"/>
</dbReference>
<dbReference type="PIR" id="E35063">
    <property type="entry name" value="R5HS23"/>
</dbReference>
<dbReference type="RefSeq" id="WP_004591553.1">
    <property type="nucleotide sequence ID" value="NZ_CP039138.1"/>
</dbReference>
<dbReference type="PDB" id="1FFK">
    <property type="method" value="X-ray"/>
    <property type="resolution" value="2.40 A"/>
    <property type="chains" value="P=2-85"/>
</dbReference>
<dbReference type="PDB" id="1JJ2">
    <property type="method" value="X-ray"/>
    <property type="resolution" value="2.40 A"/>
    <property type="chains" value="R=2-85"/>
</dbReference>
<dbReference type="PDB" id="1K73">
    <property type="method" value="X-ray"/>
    <property type="resolution" value="3.01 A"/>
    <property type="chains" value="T=2-85"/>
</dbReference>
<dbReference type="PDB" id="1K8A">
    <property type="method" value="X-ray"/>
    <property type="resolution" value="3.00 A"/>
    <property type="chains" value="T=2-85"/>
</dbReference>
<dbReference type="PDB" id="1K9M">
    <property type="method" value="X-ray"/>
    <property type="resolution" value="3.00 A"/>
    <property type="chains" value="T=2-85"/>
</dbReference>
<dbReference type="PDB" id="1KC8">
    <property type="method" value="X-ray"/>
    <property type="resolution" value="3.01 A"/>
    <property type="chains" value="T=2-85"/>
</dbReference>
<dbReference type="PDB" id="1KD1">
    <property type="method" value="X-ray"/>
    <property type="resolution" value="3.00 A"/>
    <property type="chains" value="T=2-85"/>
</dbReference>
<dbReference type="PDB" id="1KQS">
    <property type="method" value="X-ray"/>
    <property type="resolution" value="3.10 A"/>
    <property type="chains" value="R=2-85"/>
</dbReference>
<dbReference type="PDB" id="1M1K">
    <property type="method" value="X-ray"/>
    <property type="resolution" value="3.20 A"/>
    <property type="chains" value="T=2-85"/>
</dbReference>
<dbReference type="PDB" id="1M90">
    <property type="method" value="X-ray"/>
    <property type="resolution" value="2.80 A"/>
    <property type="chains" value="T=2-85"/>
</dbReference>
<dbReference type="PDB" id="1ML5">
    <property type="method" value="EM"/>
    <property type="resolution" value="14.00 A"/>
    <property type="chains" value="t=2-85"/>
</dbReference>
<dbReference type="PDB" id="1N8R">
    <property type="method" value="X-ray"/>
    <property type="resolution" value="3.00 A"/>
    <property type="chains" value="T=2-85"/>
</dbReference>
<dbReference type="PDB" id="1NJI">
    <property type="method" value="X-ray"/>
    <property type="resolution" value="3.00 A"/>
    <property type="chains" value="T=2-85"/>
</dbReference>
<dbReference type="PDB" id="1Q7Y">
    <property type="method" value="X-ray"/>
    <property type="resolution" value="3.20 A"/>
    <property type="chains" value="T=2-85"/>
</dbReference>
<dbReference type="PDB" id="1Q81">
    <property type="method" value="X-ray"/>
    <property type="resolution" value="2.95 A"/>
    <property type="chains" value="T=2-85"/>
</dbReference>
<dbReference type="PDB" id="1Q82">
    <property type="method" value="X-ray"/>
    <property type="resolution" value="2.98 A"/>
    <property type="chains" value="T=2-85"/>
</dbReference>
<dbReference type="PDB" id="1Q86">
    <property type="method" value="X-ray"/>
    <property type="resolution" value="3.00 A"/>
    <property type="chains" value="T=2-85"/>
</dbReference>
<dbReference type="PDB" id="1QVF">
    <property type="method" value="X-ray"/>
    <property type="resolution" value="3.10 A"/>
    <property type="chains" value="R=2-85"/>
</dbReference>
<dbReference type="PDB" id="1QVG">
    <property type="method" value="X-ray"/>
    <property type="resolution" value="2.90 A"/>
    <property type="chains" value="R=2-85"/>
</dbReference>
<dbReference type="PDB" id="1S72">
    <property type="method" value="X-ray"/>
    <property type="resolution" value="2.40 A"/>
    <property type="chains" value="S=1-85"/>
</dbReference>
<dbReference type="PDB" id="1VQ4">
    <property type="method" value="X-ray"/>
    <property type="resolution" value="2.70 A"/>
    <property type="chains" value="S=1-85"/>
</dbReference>
<dbReference type="PDB" id="1VQ5">
    <property type="method" value="X-ray"/>
    <property type="resolution" value="2.60 A"/>
    <property type="chains" value="S=1-85"/>
</dbReference>
<dbReference type="PDB" id="1VQ6">
    <property type="method" value="X-ray"/>
    <property type="resolution" value="2.70 A"/>
    <property type="chains" value="S=1-85"/>
</dbReference>
<dbReference type="PDB" id="1VQ7">
    <property type="method" value="X-ray"/>
    <property type="resolution" value="2.50 A"/>
    <property type="chains" value="S=1-85"/>
</dbReference>
<dbReference type="PDB" id="1VQ8">
    <property type="method" value="X-ray"/>
    <property type="resolution" value="2.20 A"/>
    <property type="chains" value="S=1-85"/>
</dbReference>
<dbReference type="PDB" id="1VQ9">
    <property type="method" value="X-ray"/>
    <property type="resolution" value="2.40 A"/>
    <property type="chains" value="S=1-85"/>
</dbReference>
<dbReference type="PDB" id="1VQK">
    <property type="method" value="X-ray"/>
    <property type="resolution" value="2.30 A"/>
    <property type="chains" value="S=1-85"/>
</dbReference>
<dbReference type="PDB" id="1VQL">
    <property type="method" value="X-ray"/>
    <property type="resolution" value="2.30 A"/>
    <property type="chains" value="S=1-85"/>
</dbReference>
<dbReference type="PDB" id="1VQM">
    <property type="method" value="X-ray"/>
    <property type="resolution" value="2.30 A"/>
    <property type="chains" value="S=1-85"/>
</dbReference>
<dbReference type="PDB" id="1VQN">
    <property type="method" value="X-ray"/>
    <property type="resolution" value="2.40 A"/>
    <property type="chains" value="S=1-85"/>
</dbReference>
<dbReference type="PDB" id="1VQO">
    <property type="method" value="X-ray"/>
    <property type="resolution" value="2.20 A"/>
    <property type="chains" value="S=1-85"/>
</dbReference>
<dbReference type="PDB" id="1VQP">
    <property type="method" value="X-ray"/>
    <property type="resolution" value="2.25 A"/>
    <property type="chains" value="S=1-85"/>
</dbReference>
<dbReference type="PDB" id="1W2B">
    <property type="method" value="X-ray"/>
    <property type="resolution" value="3.50 A"/>
    <property type="chains" value="R=2-85"/>
</dbReference>
<dbReference type="PDB" id="1YHQ">
    <property type="method" value="X-ray"/>
    <property type="resolution" value="2.40 A"/>
    <property type="chains" value="S=1-85"/>
</dbReference>
<dbReference type="PDB" id="1YI2">
    <property type="method" value="X-ray"/>
    <property type="resolution" value="2.65 A"/>
    <property type="chains" value="S=1-85"/>
</dbReference>
<dbReference type="PDB" id="1YIJ">
    <property type="method" value="X-ray"/>
    <property type="resolution" value="2.60 A"/>
    <property type="chains" value="S=1-85"/>
</dbReference>
<dbReference type="PDB" id="1YIT">
    <property type="method" value="X-ray"/>
    <property type="resolution" value="2.80 A"/>
    <property type="chains" value="S=1-85"/>
</dbReference>
<dbReference type="PDB" id="1YJ9">
    <property type="method" value="X-ray"/>
    <property type="resolution" value="2.90 A"/>
    <property type="chains" value="S=1-85"/>
</dbReference>
<dbReference type="PDB" id="1YJN">
    <property type="method" value="X-ray"/>
    <property type="resolution" value="3.00 A"/>
    <property type="chains" value="S=1-85"/>
</dbReference>
<dbReference type="PDB" id="1YJW">
    <property type="method" value="X-ray"/>
    <property type="resolution" value="2.90 A"/>
    <property type="chains" value="S=1-85"/>
</dbReference>
<dbReference type="PDB" id="2OTJ">
    <property type="method" value="X-ray"/>
    <property type="resolution" value="2.90 A"/>
    <property type="chains" value="S=1-85"/>
</dbReference>
<dbReference type="PDB" id="2OTL">
    <property type="method" value="X-ray"/>
    <property type="resolution" value="2.70 A"/>
    <property type="chains" value="S=1-85"/>
</dbReference>
<dbReference type="PDB" id="2QA4">
    <property type="method" value="X-ray"/>
    <property type="resolution" value="3.00 A"/>
    <property type="chains" value="S=1-85"/>
</dbReference>
<dbReference type="PDB" id="2QEX">
    <property type="method" value="X-ray"/>
    <property type="resolution" value="2.90 A"/>
    <property type="chains" value="S=1-85"/>
</dbReference>
<dbReference type="PDB" id="3CC2">
    <property type="method" value="X-ray"/>
    <property type="resolution" value="2.40 A"/>
    <property type="chains" value="S=1-85"/>
</dbReference>
<dbReference type="PDB" id="3CC4">
    <property type="method" value="X-ray"/>
    <property type="resolution" value="2.70 A"/>
    <property type="chains" value="S=1-85"/>
</dbReference>
<dbReference type="PDB" id="3CC7">
    <property type="method" value="X-ray"/>
    <property type="resolution" value="2.70 A"/>
    <property type="chains" value="S=1-85"/>
</dbReference>
<dbReference type="PDB" id="3CCE">
    <property type="method" value="X-ray"/>
    <property type="resolution" value="2.75 A"/>
    <property type="chains" value="S=1-85"/>
</dbReference>
<dbReference type="PDB" id="3CCJ">
    <property type="method" value="X-ray"/>
    <property type="resolution" value="2.70 A"/>
    <property type="chains" value="S=1-85"/>
</dbReference>
<dbReference type="PDB" id="3CCL">
    <property type="method" value="X-ray"/>
    <property type="resolution" value="2.90 A"/>
    <property type="chains" value="S=1-85"/>
</dbReference>
<dbReference type="PDB" id="3CCM">
    <property type="method" value="X-ray"/>
    <property type="resolution" value="2.55 A"/>
    <property type="chains" value="S=1-85"/>
</dbReference>
<dbReference type="PDB" id="3CCQ">
    <property type="method" value="X-ray"/>
    <property type="resolution" value="2.90 A"/>
    <property type="chains" value="S=1-85"/>
</dbReference>
<dbReference type="PDB" id="3CCR">
    <property type="method" value="X-ray"/>
    <property type="resolution" value="3.00 A"/>
    <property type="chains" value="S=1-85"/>
</dbReference>
<dbReference type="PDB" id="3CCS">
    <property type="method" value="X-ray"/>
    <property type="resolution" value="2.95 A"/>
    <property type="chains" value="S=1-85"/>
</dbReference>
<dbReference type="PDB" id="3CCU">
    <property type="method" value="X-ray"/>
    <property type="resolution" value="2.80 A"/>
    <property type="chains" value="S=1-85"/>
</dbReference>
<dbReference type="PDB" id="3CCV">
    <property type="method" value="X-ray"/>
    <property type="resolution" value="2.90 A"/>
    <property type="chains" value="S=1-85"/>
</dbReference>
<dbReference type="PDB" id="3CD6">
    <property type="method" value="X-ray"/>
    <property type="resolution" value="2.75 A"/>
    <property type="chains" value="S=1-85"/>
</dbReference>
<dbReference type="PDB" id="3CMA">
    <property type="method" value="X-ray"/>
    <property type="resolution" value="2.80 A"/>
    <property type="chains" value="S=1-85"/>
</dbReference>
<dbReference type="PDB" id="3CME">
    <property type="method" value="X-ray"/>
    <property type="resolution" value="2.95 A"/>
    <property type="chains" value="S=1-85"/>
</dbReference>
<dbReference type="PDB" id="3CPW">
    <property type="method" value="X-ray"/>
    <property type="resolution" value="2.70 A"/>
    <property type="chains" value="R=1-85"/>
</dbReference>
<dbReference type="PDB" id="3CXC">
    <property type="method" value="X-ray"/>
    <property type="resolution" value="3.00 A"/>
    <property type="chains" value="R=2-85"/>
</dbReference>
<dbReference type="PDB" id="3G4S">
    <property type="method" value="X-ray"/>
    <property type="resolution" value="3.20 A"/>
    <property type="chains" value="S=2-82"/>
</dbReference>
<dbReference type="PDB" id="3G6E">
    <property type="method" value="X-ray"/>
    <property type="resolution" value="2.70 A"/>
    <property type="chains" value="S=2-82"/>
</dbReference>
<dbReference type="PDB" id="3G71">
    <property type="method" value="X-ray"/>
    <property type="resolution" value="2.85 A"/>
    <property type="chains" value="S=2-82"/>
</dbReference>
<dbReference type="PDB" id="3I55">
    <property type="method" value="X-ray"/>
    <property type="resolution" value="3.11 A"/>
    <property type="chains" value="S=1-85"/>
</dbReference>
<dbReference type="PDB" id="3I56">
    <property type="method" value="X-ray"/>
    <property type="resolution" value="2.90 A"/>
    <property type="chains" value="S=1-85"/>
</dbReference>
<dbReference type="PDB" id="3OW2">
    <property type="method" value="X-ray"/>
    <property type="resolution" value="2.70 A"/>
    <property type="chains" value="R=2-82"/>
</dbReference>
<dbReference type="PDB" id="4ADX">
    <property type="method" value="EM"/>
    <property type="resolution" value="6.60 A"/>
    <property type="chains" value="S=1-85"/>
</dbReference>
<dbReference type="PDB" id="4V42">
    <property type="method" value="X-ray"/>
    <property type="resolution" value="5.50 A"/>
    <property type="chains" value="BT=2-85"/>
</dbReference>
<dbReference type="PDB" id="4V4R">
    <property type="method" value="X-ray"/>
    <property type="resolution" value="5.90 A"/>
    <property type="chains" value="BX=2-85"/>
</dbReference>
<dbReference type="PDB" id="4V4S">
    <property type="method" value="X-ray"/>
    <property type="resolution" value="6.76 A"/>
    <property type="chains" value="X=2-85"/>
</dbReference>
<dbReference type="PDB" id="4V4T">
    <property type="method" value="X-ray"/>
    <property type="resolution" value="6.46 A"/>
    <property type="chains" value="X=2-85"/>
</dbReference>
<dbReference type="PDB" id="4V9F">
    <property type="method" value="X-ray"/>
    <property type="resolution" value="2.40 A"/>
    <property type="chains" value="S=1-85"/>
</dbReference>
<dbReference type="PDBsum" id="1FFK"/>
<dbReference type="PDBsum" id="1JJ2"/>
<dbReference type="PDBsum" id="1K73"/>
<dbReference type="PDBsum" id="1K8A"/>
<dbReference type="PDBsum" id="1K9M"/>
<dbReference type="PDBsum" id="1KC8"/>
<dbReference type="PDBsum" id="1KD1"/>
<dbReference type="PDBsum" id="1KQS"/>
<dbReference type="PDBsum" id="1M1K"/>
<dbReference type="PDBsum" id="1M90"/>
<dbReference type="PDBsum" id="1ML5"/>
<dbReference type="PDBsum" id="1N8R"/>
<dbReference type="PDBsum" id="1NJI"/>
<dbReference type="PDBsum" id="1Q7Y"/>
<dbReference type="PDBsum" id="1Q81"/>
<dbReference type="PDBsum" id="1Q82"/>
<dbReference type="PDBsum" id="1Q86"/>
<dbReference type="PDBsum" id="1QVF"/>
<dbReference type="PDBsum" id="1QVG"/>
<dbReference type="PDBsum" id="1S72"/>
<dbReference type="PDBsum" id="1VQ4"/>
<dbReference type="PDBsum" id="1VQ5"/>
<dbReference type="PDBsum" id="1VQ6"/>
<dbReference type="PDBsum" id="1VQ7"/>
<dbReference type="PDBsum" id="1VQ8"/>
<dbReference type="PDBsum" id="1VQ9"/>
<dbReference type="PDBsum" id="1VQK"/>
<dbReference type="PDBsum" id="1VQL"/>
<dbReference type="PDBsum" id="1VQM"/>
<dbReference type="PDBsum" id="1VQN"/>
<dbReference type="PDBsum" id="1VQO"/>
<dbReference type="PDBsum" id="1VQP"/>
<dbReference type="PDBsum" id="1W2B"/>
<dbReference type="PDBsum" id="1YHQ"/>
<dbReference type="PDBsum" id="1YI2"/>
<dbReference type="PDBsum" id="1YIJ"/>
<dbReference type="PDBsum" id="1YIT"/>
<dbReference type="PDBsum" id="1YJ9"/>
<dbReference type="PDBsum" id="1YJN"/>
<dbReference type="PDBsum" id="1YJW"/>
<dbReference type="PDBsum" id="2OTJ"/>
<dbReference type="PDBsum" id="2OTL"/>
<dbReference type="PDBsum" id="2QA4"/>
<dbReference type="PDBsum" id="2QEX"/>
<dbReference type="PDBsum" id="3CC2"/>
<dbReference type="PDBsum" id="3CC4"/>
<dbReference type="PDBsum" id="3CC7"/>
<dbReference type="PDBsum" id="3CCE"/>
<dbReference type="PDBsum" id="3CCJ"/>
<dbReference type="PDBsum" id="3CCL"/>
<dbReference type="PDBsum" id="3CCM"/>
<dbReference type="PDBsum" id="3CCQ"/>
<dbReference type="PDBsum" id="3CCR"/>
<dbReference type="PDBsum" id="3CCS"/>
<dbReference type="PDBsum" id="3CCU"/>
<dbReference type="PDBsum" id="3CCV"/>
<dbReference type="PDBsum" id="3CD6"/>
<dbReference type="PDBsum" id="3CMA"/>
<dbReference type="PDBsum" id="3CME"/>
<dbReference type="PDBsum" id="3CPW"/>
<dbReference type="PDBsum" id="3CXC"/>
<dbReference type="PDBsum" id="3G4S"/>
<dbReference type="PDBsum" id="3G6E"/>
<dbReference type="PDBsum" id="3G71"/>
<dbReference type="PDBsum" id="3I55"/>
<dbReference type="PDBsum" id="3I56"/>
<dbReference type="PDBsum" id="3OW2"/>
<dbReference type="PDBsum" id="4ADX"/>
<dbReference type="PDBsum" id="4V42"/>
<dbReference type="PDBsum" id="4V4R"/>
<dbReference type="PDBsum" id="4V4S"/>
<dbReference type="PDBsum" id="4V4T"/>
<dbReference type="PDBsum" id="4V9F"/>
<dbReference type="SMR" id="P12732"/>
<dbReference type="IntAct" id="P12732">
    <property type="interactions" value="3"/>
</dbReference>
<dbReference type="STRING" id="272569.rrnAC1609"/>
<dbReference type="PaxDb" id="272569-rrnAC1609"/>
<dbReference type="EnsemblBacteria" id="AAV46526">
    <property type="protein sequence ID" value="AAV46526"/>
    <property type="gene ID" value="rrnAC1609"/>
</dbReference>
<dbReference type="KEGG" id="hma:rrnAC1609"/>
<dbReference type="PATRIC" id="fig|272569.17.peg.2299"/>
<dbReference type="eggNOG" id="arCOG04072">
    <property type="taxonomic scope" value="Archaea"/>
</dbReference>
<dbReference type="HOGENOM" id="CLU_037562_4_2_2"/>
<dbReference type="EvolutionaryTrace" id="P12732"/>
<dbReference type="Proteomes" id="UP000001169">
    <property type="component" value="Chromosome I"/>
</dbReference>
<dbReference type="GO" id="GO:1990904">
    <property type="term" value="C:ribonucleoprotein complex"/>
    <property type="evidence" value="ECO:0007669"/>
    <property type="project" value="UniProtKB-KW"/>
</dbReference>
<dbReference type="GO" id="GO:0005840">
    <property type="term" value="C:ribosome"/>
    <property type="evidence" value="ECO:0007669"/>
    <property type="project" value="UniProtKB-KW"/>
</dbReference>
<dbReference type="GO" id="GO:0019843">
    <property type="term" value="F:rRNA binding"/>
    <property type="evidence" value="ECO:0007669"/>
    <property type="project" value="UniProtKB-UniRule"/>
</dbReference>
<dbReference type="GO" id="GO:0003735">
    <property type="term" value="F:structural constituent of ribosome"/>
    <property type="evidence" value="ECO:0007669"/>
    <property type="project" value="InterPro"/>
</dbReference>
<dbReference type="GO" id="GO:0006412">
    <property type="term" value="P:translation"/>
    <property type="evidence" value="ECO:0007669"/>
    <property type="project" value="UniProtKB-UniRule"/>
</dbReference>
<dbReference type="FunFam" id="3.30.70.330:FF:000532">
    <property type="entry name" value="50S ribosomal protein L23"/>
    <property type="match status" value="1"/>
</dbReference>
<dbReference type="Gene3D" id="3.30.70.330">
    <property type="match status" value="1"/>
</dbReference>
<dbReference type="HAMAP" id="MF_01369_A">
    <property type="entry name" value="Ribosomal_uL23_A"/>
    <property type="match status" value="1"/>
</dbReference>
<dbReference type="InterPro" id="IPR012677">
    <property type="entry name" value="Nucleotide-bd_a/b_plait_sf"/>
</dbReference>
<dbReference type="InterPro" id="IPR019985">
    <property type="entry name" value="Ribosomal_uL23"/>
</dbReference>
<dbReference type="InterPro" id="IPR013025">
    <property type="entry name" value="Ribosomal_uL23-like"/>
</dbReference>
<dbReference type="InterPro" id="IPR012678">
    <property type="entry name" value="Ribosomal_uL23/eL15/eS24_sf"/>
</dbReference>
<dbReference type="InterPro" id="IPR001014">
    <property type="entry name" value="Ribosomal_uL23_CS"/>
</dbReference>
<dbReference type="NCBIfam" id="NF011118">
    <property type="entry name" value="PRK14548.1"/>
    <property type="match status" value="1"/>
</dbReference>
<dbReference type="NCBIfam" id="TIGR03636">
    <property type="entry name" value="uL23_arch"/>
    <property type="match status" value="1"/>
</dbReference>
<dbReference type="PANTHER" id="PTHR11620">
    <property type="entry name" value="60S RIBOSOMAL PROTEIN L23A"/>
    <property type="match status" value="1"/>
</dbReference>
<dbReference type="Pfam" id="PF00276">
    <property type="entry name" value="Ribosomal_L23"/>
    <property type="match status" value="1"/>
</dbReference>
<dbReference type="SUPFAM" id="SSF54189">
    <property type="entry name" value="Ribosomal proteins S24e, L23 and L15e"/>
    <property type="match status" value="1"/>
</dbReference>
<dbReference type="PROSITE" id="PS00050">
    <property type="entry name" value="RIBOSOMAL_L23"/>
    <property type="match status" value="1"/>
</dbReference>
<name>RL23_HALMA</name>
<evidence type="ECO:0000255" key="1">
    <source>
        <dbReference type="HAMAP-Rule" id="MF_01369"/>
    </source>
</evidence>
<evidence type="ECO:0000269" key="2">
    <source>
    </source>
</evidence>
<evidence type="ECO:0000269" key="3">
    <source>
    </source>
</evidence>
<evidence type="ECO:0000269" key="4">
    <source>
    </source>
</evidence>
<evidence type="ECO:0000269" key="5">
    <source>
    </source>
</evidence>
<evidence type="ECO:0000305" key="6"/>
<evidence type="ECO:0007829" key="7">
    <source>
        <dbReference type="PDB" id="1VQ8"/>
    </source>
</evidence>
<evidence type="ECO:0007829" key="8">
    <source>
        <dbReference type="PDB" id="1YJ9"/>
    </source>
</evidence>
<sequence>MSWDVIKHPHVTEKAMNDMDFQNKLQFAVDDRASKGEVADAVEEQYDVTVEQVNTQNTMDGEKKAVVRLSEDDDAQEVASRIGVF</sequence>
<organism>
    <name type="scientific">Haloarcula marismortui (strain ATCC 43049 / DSM 3752 / JCM 8966 / VKM B-1809)</name>
    <name type="common">Halobacterium marismortui</name>
    <dbReference type="NCBI Taxonomy" id="272569"/>
    <lineage>
        <taxon>Archaea</taxon>
        <taxon>Methanobacteriati</taxon>
        <taxon>Methanobacteriota</taxon>
        <taxon>Stenosarchaea group</taxon>
        <taxon>Halobacteria</taxon>
        <taxon>Halobacteriales</taxon>
        <taxon>Haloarculaceae</taxon>
        <taxon>Haloarcula</taxon>
    </lineage>
</organism>
<proteinExistence type="evidence at protein level"/>
<keyword id="KW-0002">3D-structure</keyword>
<keyword id="KW-0903">Direct protein sequencing</keyword>
<keyword id="KW-1185">Reference proteome</keyword>
<keyword id="KW-0687">Ribonucleoprotein</keyword>
<keyword id="KW-0689">Ribosomal protein</keyword>
<keyword id="KW-0694">RNA-binding</keyword>
<keyword id="KW-0699">rRNA-binding</keyword>